<protein>
    <recommendedName>
        <fullName evidence="1">Adenylate kinase</fullName>
        <shortName evidence="1">AK</shortName>
        <ecNumber evidence="1">2.7.4.3</ecNumber>
    </recommendedName>
    <alternativeName>
        <fullName evidence="1">ATP-AMP transphosphorylase</fullName>
    </alternativeName>
    <alternativeName>
        <fullName evidence="1">ATP:AMP phosphotransferase</fullName>
    </alternativeName>
    <alternativeName>
        <fullName evidence="1">Adenylate monophosphate kinase</fullName>
    </alternativeName>
</protein>
<accession>Q6NJ71</accession>
<comment type="function">
    <text evidence="1">Catalyzes the reversible transfer of the terminal phosphate group between ATP and AMP. Plays an important role in cellular energy homeostasis and in adenine nucleotide metabolism.</text>
</comment>
<comment type="catalytic activity">
    <reaction evidence="1">
        <text>AMP + ATP = 2 ADP</text>
        <dbReference type="Rhea" id="RHEA:12973"/>
        <dbReference type="ChEBI" id="CHEBI:30616"/>
        <dbReference type="ChEBI" id="CHEBI:456215"/>
        <dbReference type="ChEBI" id="CHEBI:456216"/>
        <dbReference type="EC" id="2.7.4.3"/>
    </reaction>
</comment>
<comment type="pathway">
    <text evidence="1">Purine metabolism; AMP biosynthesis via salvage pathway; AMP from ADP: step 1/1.</text>
</comment>
<comment type="subunit">
    <text evidence="1">Monomer.</text>
</comment>
<comment type="subcellular location">
    <subcellularLocation>
        <location evidence="1">Cytoplasm</location>
    </subcellularLocation>
</comment>
<comment type="domain">
    <text evidence="1">Consists of three domains, a large central CORE domain and two small peripheral domains, NMPbind and LID, which undergo movements during catalysis. The LID domain closes over the site of phosphoryl transfer upon ATP binding. Assembling and dissambling the active center during each catalytic cycle provides an effective means to prevent ATP hydrolysis.</text>
</comment>
<comment type="similarity">
    <text evidence="1">Belongs to the adenylate kinase family.</text>
</comment>
<sequence length="181" mass="19742">MRLVLLGPPGAGKGTQAAILSEKLRIPHISTGDLFRANIGEGTPLGKEAKSYIDAGKLVPTDVTARMVKARLQKDDAEVGFLLDGFPRTVEQAEILKEMLKGFGVELNGVINYEVAEDVVVERMLARGRADDNEDTIRTRLQVYRDETAPLIRHYGDDIITIKAEGSIEDINARTLGALGK</sequence>
<proteinExistence type="inferred from homology"/>
<name>KAD_CORDI</name>
<gene>
    <name evidence="1" type="primary">adk</name>
    <name type="ordered locus">DIP0541</name>
</gene>
<keyword id="KW-0067">ATP-binding</keyword>
<keyword id="KW-0963">Cytoplasm</keyword>
<keyword id="KW-0418">Kinase</keyword>
<keyword id="KW-0545">Nucleotide biosynthesis</keyword>
<keyword id="KW-0547">Nucleotide-binding</keyword>
<keyword id="KW-1185">Reference proteome</keyword>
<keyword id="KW-0808">Transferase</keyword>
<reference key="1">
    <citation type="journal article" date="2003" name="Nucleic Acids Res.">
        <title>The complete genome sequence and analysis of Corynebacterium diphtheriae NCTC13129.</title>
        <authorList>
            <person name="Cerdeno-Tarraga A.-M."/>
            <person name="Efstratiou A."/>
            <person name="Dover L.G."/>
            <person name="Holden M.T.G."/>
            <person name="Pallen M.J."/>
            <person name="Bentley S.D."/>
            <person name="Besra G.S."/>
            <person name="Churcher C.M."/>
            <person name="James K.D."/>
            <person name="De Zoysa A."/>
            <person name="Chillingworth T."/>
            <person name="Cronin A."/>
            <person name="Dowd L."/>
            <person name="Feltwell T."/>
            <person name="Hamlin N."/>
            <person name="Holroyd S."/>
            <person name="Jagels K."/>
            <person name="Moule S."/>
            <person name="Quail M.A."/>
            <person name="Rabbinowitsch E."/>
            <person name="Rutherford K.M."/>
            <person name="Thomson N.R."/>
            <person name="Unwin L."/>
            <person name="Whitehead S."/>
            <person name="Barrell B.G."/>
            <person name="Parkhill J."/>
        </authorList>
    </citation>
    <scope>NUCLEOTIDE SEQUENCE [LARGE SCALE GENOMIC DNA]</scope>
    <source>
        <strain>ATCC 700971 / NCTC 13129 / Biotype gravis</strain>
    </source>
</reference>
<dbReference type="EC" id="2.7.4.3" evidence="1"/>
<dbReference type="EMBL" id="BX248355">
    <property type="protein sequence ID" value="CAE49052.1"/>
    <property type="molecule type" value="Genomic_DNA"/>
</dbReference>
<dbReference type="RefSeq" id="WP_010934369.1">
    <property type="nucleotide sequence ID" value="NC_002935.2"/>
</dbReference>
<dbReference type="SMR" id="Q6NJ71"/>
<dbReference type="STRING" id="257309.DIP0541"/>
<dbReference type="KEGG" id="cdi:DIP0541"/>
<dbReference type="HOGENOM" id="CLU_032354_4_1_11"/>
<dbReference type="UniPathway" id="UPA00588">
    <property type="reaction ID" value="UER00649"/>
</dbReference>
<dbReference type="Proteomes" id="UP000002198">
    <property type="component" value="Chromosome"/>
</dbReference>
<dbReference type="GO" id="GO:0005737">
    <property type="term" value="C:cytoplasm"/>
    <property type="evidence" value="ECO:0007669"/>
    <property type="project" value="UniProtKB-SubCell"/>
</dbReference>
<dbReference type="GO" id="GO:0004017">
    <property type="term" value="F:adenylate kinase activity"/>
    <property type="evidence" value="ECO:0007669"/>
    <property type="project" value="UniProtKB-UniRule"/>
</dbReference>
<dbReference type="GO" id="GO:0005524">
    <property type="term" value="F:ATP binding"/>
    <property type="evidence" value="ECO:0007669"/>
    <property type="project" value="UniProtKB-UniRule"/>
</dbReference>
<dbReference type="GO" id="GO:0044209">
    <property type="term" value="P:AMP salvage"/>
    <property type="evidence" value="ECO:0007669"/>
    <property type="project" value="UniProtKB-UniRule"/>
</dbReference>
<dbReference type="CDD" id="cd01428">
    <property type="entry name" value="ADK"/>
    <property type="match status" value="1"/>
</dbReference>
<dbReference type="Gene3D" id="3.40.50.300">
    <property type="entry name" value="P-loop containing nucleotide triphosphate hydrolases"/>
    <property type="match status" value="1"/>
</dbReference>
<dbReference type="HAMAP" id="MF_00235">
    <property type="entry name" value="Adenylate_kinase_Adk"/>
    <property type="match status" value="1"/>
</dbReference>
<dbReference type="InterPro" id="IPR000850">
    <property type="entry name" value="Adenylat/UMP-CMP_kin"/>
</dbReference>
<dbReference type="InterPro" id="IPR033690">
    <property type="entry name" value="Adenylat_kinase_CS"/>
</dbReference>
<dbReference type="InterPro" id="IPR027417">
    <property type="entry name" value="P-loop_NTPase"/>
</dbReference>
<dbReference type="NCBIfam" id="NF001381">
    <property type="entry name" value="PRK00279.1-3"/>
    <property type="match status" value="1"/>
</dbReference>
<dbReference type="NCBIfam" id="NF011100">
    <property type="entry name" value="PRK14527.1"/>
    <property type="match status" value="1"/>
</dbReference>
<dbReference type="NCBIfam" id="NF011104">
    <property type="entry name" value="PRK14531.1"/>
    <property type="match status" value="1"/>
</dbReference>
<dbReference type="PANTHER" id="PTHR23359">
    <property type="entry name" value="NUCLEOTIDE KINASE"/>
    <property type="match status" value="1"/>
</dbReference>
<dbReference type="Pfam" id="PF00406">
    <property type="entry name" value="ADK"/>
    <property type="match status" value="1"/>
</dbReference>
<dbReference type="PRINTS" id="PR00094">
    <property type="entry name" value="ADENYLTKNASE"/>
</dbReference>
<dbReference type="SUPFAM" id="SSF52540">
    <property type="entry name" value="P-loop containing nucleoside triphosphate hydrolases"/>
    <property type="match status" value="1"/>
</dbReference>
<dbReference type="PROSITE" id="PS00113">
    <property type="entry name" value="ADENYLATE_KINASE"/>
    <property type="match status" value="1"/>
</dbReference>
<evidence type="ECO:0000255" key="1">
    <source>
        <dbReference type="HAMAP-Rule" id="MF_00235"/>
    </source>
</evidence>
<organism>
    <name type="scientific">Corynebacterium diphtheriae (strain ATCC 700971 / NCTC 13129 / Biotype gravis)</name>
    <dbReference type="NCBI Taxonomy" id="257309"/>
    <lineage>
        <taxon>Bacteria</taxon>
        <taxon>Bacillati</taxon>
        <taxon>Actinomycetota</taxon>
        <taxon>Actinomycetes</taxon>
        <taxon>Mycobacteriales</taxon>
        <taxon>Corynebacteriaceae</taxon>
        <taxon>Corynebacterium</taxon>
    </lineage>
</organism>
<feature type="chain" id="PRO_0000158760" description="Adenylate kinase">
    <location>
        <begin position="1"/>
        <end position="181"/>
    </location>
</feature>
<feature type="region of interest" description="NMP" evidence="1">
    <location>
        <begin position="30"/>
        <end position="59"/>
    </location>
</feature>
<feature type="region of interest" description="LID" evidence="1">
    <location>
        <begin position="126"/>
        <end position="132"/>
    </location>
</feature>
<feature type="binding site" evidence="1">
    <location>
        <begin position="10"/>
        <end position="15"/>
    </location>
    <ligand>
        <name>ATP</name>
        <dbReference type="ChEBI" id="CHEBI:30616"/>
    </ligand>
</feature>
<feature type="binding site" evidence="1">
    <location>
        <position position="31"/>
    </location>
    <ligand>
        <name>AMP</name>
        <dbReference type="ChEBI" id="CHEBI:456215"/>
    </ligand>
</feature>
<feature type="binding site" evidence="1">
    <location>
        <position position="36"/>
    </location>
    <ligand>
        <name>AMP</name>
        <dbReference type="ChEBI" id="CHEBI:456215"/>
    </ligand>
</feature>
<feature type="binding site" evidence="1">
    <location>
        <begin position="57"/>
        <end position="59"/>
    </location>
    <ligand>
        <name>AMP</name>
        <dbReference type="ChEBI" id="CHEBI:456215"/>
    </ligand>
</feature>
<feature type="binding site" evidence="1">
    <location>
        <begin position="85"/>
        <end position="88"/>
    </location>
    <ligand>
        <name>AMP</name>
        <dbReference type="ChEBI" id="CHEBI:456215"/>
    </ligand>
</feature>
<feature type="binding site" evidence="1">
    <location>
        <position position="92"/>
    </location>
    <ligand>
        <name>AMP</name>
        <dbReference type="ChEBI" id="CHEBI:456215"/>
    </ligand>
</feature>
<feature type="binding site" evidence="1">
    <location>
        <position position="127"/>
    </location>
    <ligand>
        <name>ATP</name>
        <dbReference type="ChEBI" id="CHEBI:30616"/>
    </ligand>
</feature>
<feature type="binding site" evidence="1">
    <location>
        <position position="129"/>
    </location>
    <ligand>
        <name>AMP</name>
        <dbReference type="ChEBI" id="CHEBI:456215"/>
    </ligand>
</feature>
<feature type="binding site" evidence="1">
    <location>
        <position position="140"/>
    </location>
    <ligand>
        <name>AMP</name>
        <dbReference type="ChEBI" id="CHEBI:456215"/>
    </ligand>
</feature>
<feature type="binding site" evidence="1">
    <location>
        <position position="166"/>
    </location>
    <ligand>
        <name>ATP</name>
        <dbReference type="ChEBI" id="CHEBI:30616"/>
    </ligand>
</feature>